<keyword id="KW-0227">DNA damage</keyword>
<keyword id="KW-0233">DNA recombination</keyword>
<keyword id="KW-0234">DNA repair</keyword>
<keyword id="KW-0479">Metal-binding</keyword>
<keyword id="KW-1185">Reference proteome</keyword>
<keyword id="KW-0862">Zinc</keyword>
<keyword id="KW-0863">Zinc-finger</keyword>
<gene>
    <name evidence="1" type="primary">recR</name>
    <name type="ordered locus">GSU0096</name>
</gene>
<evidence type="ECO:0000255" key="1">
    <source>
        <dbReference type="HAMAP-Rule" id="MF_00017"/>
    </source>
</evidence>
<organism>
    <name type="scientific">Geobacter sulfurreducens (strain ATCC 51573 / DSM 12127 / PCA)</name>
    <dbReference type="NCBI Taxonomy" id="243231"/>
    <lineage>
        <taxon>Bacteria</taxon>
        <taxon>Pseudomonadati</taxon>
        <taxon>Thermodesulfobacteriota</taxon>
        <taxon>Desulfuromonadia</taxon>
        <taxon>Geobacterales</taxon>
        <taxon>Geobacteraceae</taxon>
        <taxon>Geobacter</taxon>
    </lineage>
</organism>
<proteinExistence type="inferred from homology"/>
<accession>Q74GZ7</accession>
<sequence length="197" mass="21532">MVHFSDSLSRLLAELQKLPGVGEKTALRLAFHLLKSPDNAAALADSLRDVMSRVRFCSVCFGITEDDPCRFCSDARDDGAICVVEEPQDLLAVERTRAFRGRYHVLQGALSPLNGVTPDRLRVAELMKRLEGGGVREVVIATNFTVEGEATALYLARMIKPLGVRVTRLAHGIPLGSDLEFVDAATVQRALEGRSEL</sequence>
<feature type="chain" id="PRO_0000190324" description="Recombination protein RecR">
    <location>
        <begin position="1"/>
        <end position="197"/>
    </location>
</feature>
<feature type="domain" description="Toprim" evidence="1">
    <location>
        <begin position="79"/>
        <end position="174"/>
    </location>
</feature>
<feature type="zinc finger region" description="C4-type" evidence="1">
    <location>
        <begin position="57"/>
        <end position="72"/>
    </location>
</feature>
<protein>
    <recommendedName>
        <fullName evidence="1">Recombination protein RecR</fullName>
    </recommendedName>
</protein>
<comment type="function">
    <text evidence="1">May play a role in DNA repair. It seems to be involved in an RecBC-independent recombinational process of DNA repair. It may act with RecF and RecO.</text>
</comment>
<comment type="similarity">
    <text evidence="1">Belongs to the RecR family.</text>
</comment>
<name>RECR_GEOSL</name>
<dbReference type="EMBL" id="AE017180">
    <property type="protein sequence ID" value="AAR33431.1"/>
    <property type="molecule type" value="Genomic_DNA"/>
</dbReference>
<dbReference type="RefSeq" id="NP_951158.1">
    <property type="nucleotide sequence ID" value="NC_002939.5"/>
</dbReference>
<dbReference type="RefSeq" id="WP_010940773.1">
    <property type="nucleotide sequence ID" value="NC_002939.5"/>
</dbReference>
<dbReference type="SMR" id="Q74GZ7"/>
<dbReference type="FunCoup" id="Q74GZ7">
    <property type="interactions" value="266"/>
</dbReference>
<dbReference type="STRING" id="243231.GSU0096"/>
<dbReference type="EnsemblBacteria" id="AAR33431">
    <property type="protein sequence ID" value="AAR33431"/>
    <property type="gene ID" value="GSU0096"/>
</dbReference>
<dbReference type="KEGG" id="gsu:GSU0096"/>
<dbReference type="PATRIC" id="fig|243231.5.peg.97"/>
<dbReference type="eggNOG" id="COG0353">
    <property type="taxonomic scope" value="Bacteria"/>
</dbReference>
<dbReference type="HOGENOM" id="CLU_060739_1_0_7"/>
<dbReference type="InParanoid" id="Q74GZ7"/>
<dbReference type="OrthoDB" id="9802672at2"/>
<dbReference type="Proteomes" id="UP000000577">
    <property type="component" value="Chromosome"/>
</dbReference>
<dbReference type="GO" id="GO:0003677">
    <property type="term" value="F:DNA binding"/>
    <property type="evidence" value="ECO:0007669"/>
    <property type="project" value="UniProtKB-UniRule"/>
</dbReference>
<dbReference type="GO" id="GO:0008270">
    <property type="term" value="F:zinc ion binding"/>
    <property type="evidence" value="ECO:0007669"/>
    <property type="project" value="UniProtKB-KW"/>
</dbReference>
<dbReference type="GO" id="GO:0006302">
    <property type="term" value="P:double-strand break repair"/>
    <property type="evidence" value="ECO:0000318"/>
    <property type="project" value="GO_Central"/>
</dbReference>
<dbReference type="GO" id="GO:0000725">
    <property type="term" value="P:recombinational repair"/>
    <property type="evidence" value="ECO:0000318"/>
    <property type="project" value="GO_Central"/>
</dbReference>
<dbReference type="CDD" id="cd01025">
    <property type="entry name" value="TOPRIM_recR"/>
    <property type="match status" value="1"/>
</dbReference>
<dbReference type="Gene3D" id="3.30.60.80">
    <property type="match status" value="1"/>
</dbReference>
<dbReference type="Gene3D" id="3.40.1360.10">
    <property type="match status" value="1"/>
</dbReference>
<dbReference type="Gene3D" id="6.10.250.240">
    <property type="match status" value="1"/>
</dbReference>
<dbReference type="Gene3D" id="1.10.8.420">
    <property type="entry name" value="RecR Domain 1"/>
    <property type="match status" value="1"/>
</dbReference>
<dbReference type="HAMAP" id="MF_00017">
    <property type="entry name" value="RecR"/>
    <property type="match status" value="1"/>
</dbReference>
<dbReference type="InterPro" id="IPR000093">
    <property type="entry name" value="DNA_Rcmb_RecR"/>
</dbReference>
<dbReference type="InterPro" id="IPR003583">
    <property type="entry name" value="Hlx-hairpin-Hlx_DNA-bd_motif"/>
</dbReference>
<dbReference type="InterPro" id="IPR023627">
    <property type="entry name" value="Rcmb_RecR"/>
</dbReference>
<dbReference type="InterPro" id="IPR015967">
    <property type="entry name" value="Rcmb_RecR_Znf"/>
</dbReference>
<dbReference type="InterPro" id="IPR006171">
    <property type="entry name" value="TOPRIM_dom"/>
</dbReference>
<dbReference type="InterPro" id="IPR034137">
    <property type="entry name" value="TOPRIM_RecR"/>
</dbReference>
<dbReference type="NCBIfam" id="TIGR00615">
    <property type="entry name" value="recR"/>
    <property type="match status" value="1"/>
</dbReference>
<dbReference type="PANTHER" id="PTHR30446">
    <property type="entry name" value="RECOMBINATION PROTEIN RECR"/>
    <property type="match status" value="1"/>
</dbReference>
<dbReference type="PANTHER" id="PTHR30446:SF0">
    <property type="entry name" value="RECOMBINATION PROTEIN RECR"/>
    <property type="match status" value="1"/>
</dbReference>
<dbReference type="Pfam" id="PF21175">
    <property type="entry name" value="RecR_C"/>
    <property type="match status" value="1"/>
</dbReference>
<dbReference type="Pfam" id="PF21176">
    <property type="entry name" value="RecR_HhH"/>
    <property type="match status" value="1"/>
</dbReference>
<dbReference type="Pfam" id="PF02132">
    <property type="entry name" value="RecR_ZnF"/>
    <property type="match status" value="1"/>
</dbReference>
<dbReference type="Pfam" id="PF13662">
    <property type="entry name" value="Toprim_4"/>
    <property type="match status" value="1"/>
</dbReference>
<dbReference type="SMART" id="SM00278">
    <property type="entry name" value="HhH1"/>
    <property type="match status" value="1"/>
</dbReference>
<dbReference type="SMART" id="SM00493">
    <property type="entry name" value="TOPRIM"/>
    <property type="match status" value="1"/>
</dbReference>
<dbReference type="SUPFAM" id="SSF111304">
    <property type="entry name" value="Recombination protein RecR"/>
    <property type="match status" value="1"/>
</dbReference>
<dbReference type="PROSITE" id="PS01300">
    <property type="entry name" value="RECR"/>
    <property type="match status" value="1"/>
</dbReference>
<dbReference type="PROSITE" id="PS50880">
    <property type="entry name" value="TOPRIM"/>
    <property type="match status" value="1"/>
</dbReference>
<reference key="1">
    <citation type="journal article" date="2003" name="Science">
        <title>Genome of Geobacter sulfurreducens: metal reduction in subsurface environments.</title>
        <authorList>
            <person name="Methe B.A."/>
            <person name="Nelson K.E."/>
            <person name="Eisen J.A."/>
            <person name="Paulsen I.T."/>
            <person name="Nelson W.C."/>
            <person name="Heidelberg J.F."/>
            <person name="Wu D."/>
            <person name="Wu M."/>
            <person name="Ward N.L."/>
            <person name="Beanan M.J."/>
            <person name="Dodson R.J."/>
            <person name="Madupu R."/>
            <person name="Brinkac L.M."/>
            <person name="Daugherty S.C."/>
            <person name="DeBoy R.T."/>
            <person name="Durkin A.S."/>
            <person name="Gwinn M.L."/>
            <person name="Kolonay J.F."/>
            <person name="Sullivan S.A."/>
            <person name="Haft D.H."/>
            <person name="Selengut J."/>
            <person name="Davidsen T.M."/>
            <person name="Zafar N."/>
            <person name="White O."/>
            <person name="Tran B."/>
            <person name="Romero C."/>
            <person name="Forberger H.A."/>
            <person name="Weidman J.F."/>
            <person name="Khouri H.M."/>
            <person name="Feldblyum T.V."/>
            <person name="Utterback T.R."/>
            <person name="Van Aken S.E."/>
            <person name="Lovley D.R."/>
            <person name="Fraser C.M."/>
        </authorList>
    </citation>
    <scope>NUCLEOTIDE SEQUENCE [LARGE SCALE GENOMIC DNA]</scope>
    <source>
        <strain>ATCC 51573 / DSM 12127 / PCA</strain>
    </source>
</reference>